<feature type="signal peptide" evidence="2">
    <location>
        <begin position="1"/>
        <end position="20"/>
    </location>
</feature>
<feature type="propeptide" id="PRO_0000412832" evidence="1">
    <location>
        <begin position="21"/>
        <end position="79"/>
    </location>
</feature>
<feature type="peptide" id="PRO_0000412833" description="Cholecystoxin-22">
    <location>
        <begin position="80"/>
        <end position="101"/>
    </location>
</feature>
<feature type="peptide" id="PRO_0000412834" description="Cholecystoxin-8">
    <location>
        <begin position="94"/>
        <end position="101"/>
    </location>
</feature>
<feature type="propeptide" id="PRO_0000412835" evidence="1">
    <location>
        <begin position="102"/>
        <end position="113"/>
    </location>
</feature>
<feature type="region of interest" description="Disordered" evidence="3">
    <location>
        <begin position="77"/>
        <end position="97"/>
    </location>
</feature>
<feature type="modified residue" description="Sulfotyrosine" evidence="1">
    <location>
        <position position="95"/>
    </location>
</feature>
<feature type="modified residue" description="Phenylalanine amide" evidence="1">
    <location>
        <position position="101"/>
    </location>
</feature>
<evidence type="ECO:0000250" key="1"/>
<evidence type="ECO:0000255" key="2"/>
<evidence type="ECO:0000256" key="3">
    <source>
        <dbReference type="SAM" id="MobiDB-lite"/>
    </source>
</evidence>
<evidence type="ECO:0000269" key="4">
    <source>
    </source>
</evidence>
<evidence type="ECO:0000305" key="5"/>
<accession>E2E4E4</accession>
<keyword id="KW-0027">Amidation</keyword>
<keyword id="KW-0165">Cleavage on pair of basic residues</keyword>
<keyword id="KW-1213">G-protein coupled receptor impairing toxin</keyword>
<keyword id="KW-0382">Hypotensive agent</keyword>
<keyword id="KW-0964">Secreted</keyword>
<keyword id="KW-0732">Signal</keyword>
<keyword id="KW-0765">Sulfation</keyword>
<keyword id="KW-0800">Toxin</keyword>
<sequence length="113" mass="12541">MYGGICLCVLLAVLAISSSGQHISRSLNGNSLAAAIEQNFPEKHRPARTPDSNQRVESNIDEKANLGVLLARYLQKARRGTNGKPPDPKKESQDYLGWMDFGRRSAEEYEYSS</sequence>
<organism>
    <name type="scientific">Varanus varius</name>
    <name type="common">Lace monitor lizard</name>
    <name type="synonym">Lacerta varia</name>
    <dbReference type="NCBI Taxonomy" id="8559"/>
    <lineage>
        <taxon>Eukaryota</taxon>
        <taxon>Metazoa</taxon>
        <taxon>Chordata</taxon>
        <taxon>Craniata</taxon>
        <taxon>Vertebrata</taxon>
        <taxon>Euteleostomi</taxon>
        <taxon>Lepidosauria</taxon>
        <taxon>Squamata</taxon>
        <taxon>Bifurcata</taxon>
        <taxon>Unidentata</taxon>
        <taxon>Episquamata</taxon>
        <taxon>Toxicofera</taxon>
        <taxon>Anguimorpha</taxon>
        <taxon>Paleoanguimorpha</taxon>
        <taxon>Varanoidea</taxon>
        <taxon>Varanidae</taxon>
        <taxon>Varanus</taxon>
    </lineage>
</organism>
<protein>
    <recommendedName>
        <fullName>Cholecystoxin</fullName>
    </recommendedName>
    <alternativeName>
        <fullName>Cholecystoxin-Vvar1</fullName>
    </alternativeName>
    <component>
        <recommendedName>
            <fullName>Cholecystoxin-22</fullName>
            <shortName>CCK-22</shortName>
        </recommendedName>
    </component>
    <component>
        <recommendedName>
            <fullName>Cholecystoxin-8</fullName>
            <shortName>CCK-8</shortName>
        </recommendedName>
    </component>
</protein>
<reference key="1">
    <citation type="journal article" date="2010" name="Mol. Cell. Proteomics">
        <title>Functional and structural diversification of the Anguimorpha lizard venom system.</title>
        <authorList>
            <person name="Fry B.G."/>
            <person name="Winter K."/>
            <person name="Norman J.A."/>
            <person name="Roelants K."/>
            <person name="Nabuurs R.J."/>
            <person name="van Osch M.J."/>
            <person name="Teeuwisse W.M."/>
            <person name="van der Weerd L."/>
            <person name="McNaughtan J.E."/>
            <person name="Kwok H.F."/>
            <person name="Scheib H."/>
            <person name="Greisman L."/>
            <person name="Kochva E."/>
            <person name="Miller L.J."/>
            <person name="Gao F."/>
            <person name="Karas J."/>
            <person name="Scanlon D."/>
            <person name="Lin F."/>
            <person name="Kuruppu S."/>
            <person name="Shaw C."/>
            <person name="Wong L."/>
            <person name="Hodgson W.C."/>
        </authorList>
    </citation>
    <scope>NUCLEOTIDE SEQUENCE [MRNA]</scope>
    <scope>SYNTHESIS OF 80-101 AND 94-101</scope>
    <scope>FUNCTION</scope>
    <source>
        <tissue>Venom gland</tissue>
    </source>
</reference>
<name>CCT1_VARVA</name>
<comment type="function">
    <text evidence="4">Cholecystokinin-22: hypotensive neuropeptide that binds cholecystokinin receptor type A receptor (CCKAR).</text>
</comment>
<comment type="function">
    <text evidence="4">Cholecystokinin-8: hypotensive neuropeptide that binds cholecystokinin receptor type A receptor (CCKAR).</text>
</comment>
<comment type="subcellular location">
    <subcellularLocation>
        <location evidence="1">Secreted</location>
    </subcellularLocation>
</comment>
<comment type="tissue specificity">
    <text>Expressed by the mandibular venom gland.</text>
</comment>
<comment type="similarity">
    <text evidence="5">Belongs to the gastrin/cholecystokinin family.</text>
</comment>
<dbReference type="EMBL" id="GU441461">
    <property type="protein sequence ID" value="ADK39225.1"/>
    <property type="molecule type" value="mRNA"/>
</dbReference>
<dbReference type="GO" id="GO:0030424">
    <property type="term" value="C:axon"/>
    <property type="evidence" value="ECO:0007669"/>
    <property type="project" value="TreeGrafter"/>
</dbReference>
<dbReference type="GO" id="GO:0005615">
    <property type="term" value="C:extracellular space"/>
    <property type="evidence" value="ECO:0007669"/>
    <property type="project" value="TreeGrafter"/>
</dbReference>
<dbReference type="GO" id="GO:0005184">
    <property type="term" value="F:neuropeptide hormone activity"/>
    <property type="evidence" value="ECO:0007669"/>
    <property type="project" value="InterPro"/>
</dbReference>
<dbReference type="GO" id="GO:0090729">
    <property type="term" value="F:toxin activity"/>
    <property type="evidence" value="ECO:0007669"/>
    <property type="project" value="UniProtKB-KW"/>
</dbReference>
<dbReference type="GO" id="GO:0007586">
    <property type="term" value="P:digestion"/>
    <property type="evidence" value="ECO:0007669"/>
    <property type="project" value="InterPro"/>
</dbReference>
<dbReference type="GO" id="GO:0008217">
    <property type="term" value="P:regulation of blood pressure"/>
    <property type="evidence" value="ECO:0007669"/>
    <property type="project" value="UniProtKB-KW"/>
</dbReference>
<dbReference type="InterPro" id="IPR015499">
    <property type="entry name" value="CCK-like"/>
</dbReference>
<dbReference type="InterPro" id="IPR001651">
    <property type="entry name" value="Gastrin/CCK"/>
</dbReference>
<dbReference type="InterPro" id="IPR013152">
    <property type="entry name" value="Gastrin/cholecystokinin_CS"/>
</dbReference>
<dbReference type="PANTHER" id="PTHR10786">
    <property type="entry name" value="CHOLECYSTOKININ"/>
    <property type="match status" value="1"/>
</dbReference>
<dbReference type="PANTHER" id="PTHR10786:SF0">
    <property type="entry name" value="CHOLECYSTOKININ"/>
    <property type="match status" value="1"/>
</dbReference>
<dbReference type="Pfam" id="PF00918">
    <property type="entry name" value="Gastrin"/>
    <property type="match status" value="1"/>
</dbReference>
<dbReference type="SMART" id="SM00029">
    <property type="entry name" value="GASTRIN"/>
    <property type="match status" value="1"/>
</dbReference>
<dbReference type="PROSITE" id="PS00259">
    <property type="entry name" value="GASTRIN"/>
    <property type="match status" value="1"/>
</dbReference>
<proteinExistence type="evidence at transcript level"/>